<name>VE1_CRPVW</name>
<sequence>MAEGTDPLDDCGGFLDTEADCLDCDNLEEDLTELFDADTVSSLLDDTDQVQGNSLELFQHHEATETLKSIEHLKRKYVDSPDKSLGIDNSVNAESLQVESGFGSQQSVSDTPVTDILNANTARVKHLLLFRQAHSVSFSELTRTFQSDKTMSWDWVGGLADIHASVLESLQTSLRSHC</sequence>
<gene>
    <name type="primary">E1</name>
</gene>
<feature type="chain" id="PRO_0000133167" description="Replication protein E1">
    <location>
        <begin position="1"/>
        <end position="178" status="greater than"/>
    </location>
</feature>
<feature type="non-consecutive residues" evidence="2">
    <location>
        <begin position="93"/>
        <end position="94"/>
    </location>
</feature>
<feature type="non-terminal residue">
    <location>
        <position position="178"/>
    </location>
</feature>
<keyword id="KW-0067">ATP-binding</keyword>
<keyword id="KW-0235">DNA replication</keyword>
<keyword id="KW-0238">DNA-binding</keyword>
<keyword id="KW-0244">Early protein</keyword>
<keyword id="KW-0347">Helicase</keyword>
<keyword id="KW-1048">Host nucleus</keyword>
<keyword id="KW-0378">Hydrolase</keyword>
<keyword id="KW-0413">Isomerase</keyword>
<keyword id="KW-0547">Nucleotide-binding</keyword>
<comment type="function">
    <text evidence="1">ATP-dependent DNA 3'-5' helicase required for initiation of viral DNA replication. It forms a complex with the viral E2 protein. The E1-E2 complex binds to the replication origin which contains binding sites for both proteins. During the initial step, a dimer of E1 interacts with a dimer of protein E2 leading to a complex that binds the viral origin of replication with high specificity. Then, a second dimer of E1 displaces the E2 dimer in an ATP-dependent manner to form the E1 tetramer. Following this, two E1 monomers are added to each half of the site, which results in the formation of two E1 trimers on the viral ori. Subsequently, two hexamers will be created. The double hexamer acts as a bi-directional helicase machinery and unwinds the viral DNA and then recruits the host DNA polymerase to start replication.</text>
</comment>
<comment type="catalytic activity">
    <reaction evidence="1">
        <text>Couples ATP hydrolysis with the unwinding of duplex DNA by translocating in the 3'-5' direction.</text>
        <dbReference type="EC" id="5.6.2.4"/>
    </reaction>
</comment>
<comment type="catalytic activity">
    <reaction evidence="1">
        <text>ATP + H2O = ADP + phosphate + H(+)</text>
        <dbReference type="Rhea" id="RHEA:13065"/>
        <dbReference type="ChEBI" id="CHEBI:15377"/>
        <dbReference type="ChEBI" id="CHEBI:15378"/>
        <dbReference type="ChEBI" id="CHEBI:30616"/>
        <dbReference type="ChEBI" id="CHEBI:43474"/>
        <dbReference type="ChEBI" id="CHEBI:456216"/>
        <dbReference type="EC" id="5.6.2.4"/>
    </reaction>
</comment>
<comment type="subcellular location">
    <subcellularLocation>
        <location evidence="1">Host nucleus</location>
    </subcellularLocation>
</comment>
<comment type="similarity">
    <text evidence="2">Belongs to the papillomaviridae E1 protein family.</text>
</comment>
<dbReference type="EC" id="5.6.2.4" evidence="1"/>
<dbReference type="EMBL" id="U09467">
    <property type="protein sequence ID" value="AAB60539.1"/>
    <property type="molecule type" value="Genomic_DNA"/>
</dbReference>
<dbReference type="EMBL" id="U09495">
    <property type="protein sequence ID" value="AAB60540.2"/>
    <property type="molecule type" value="Genomic_DNA"/>
</dbReference>
<dbReference type="GO" id="GO:0042025">
    <property type="term" value="C:host cell nucleus"/>
    <property type="evidence" value="ECO:0007669"/>
    <property type="project" value="UniProtKB-SubCell"/>
</dbReference>
<dbReference type="GO" id="GO:0005524">
    <property type="term" value="F:ATP binding"/>
    <property type="evidence" value="ECO:0007669"/>
    <property type="project" value="UniProtKB-KW"/>
</dbReference>
<dbReference type="GO" id="GO:0016887">
    <property type="term" value="F:ATP hydrolysis activity"/>
    <property type="evidence" value="ECO:0007669"/>
    <property type="project" value="RHEA"/>
</dbReference>
<dbReference type="GO" id="GO:0003677">
    <property type="term" value="F:DNA binding"/>
    <property type="evidence" value="ECO:0007669"/>
    <property type="project" value="UniProtKB-KW"/>
</dbReference>
<dbReference type="GO" id="GO:0004386">
    <property type="term" value="F:helicase activity"/>
    <property type="evidence" value="ECO:0007669"/>
    <property type="project" value="UniProtKB-KW"/>
</dbReference>
<dbReference type="GO" id="GO:0006260">
    <property type="term" value="P:DNA replication"/>
    <property type="evidence" value="ECO:0007669"/>
    <property type="project" value="UniProtKB-KW"/>
</dbReference>
<dbReference type="Gene3D" id="3.40.1310.10">
    <property type="match status" value="1"/>
</dbReference>
<dbReference type="InterPro" id="IPR014000">
    <property type="entry name" value="PPV_DNA_helicase_E1_N"/>
</dbReference>
<dbReference type="InterPro" id="IPR046832">
    <property type="entry name" value="PPV_E1_DBD"/>
</dbReference>
<dbReference type="InterPro" id="IPR046935">
    <property type="entry name" value="PPV_E1_DBD_sf"/>
</dbReference>
<dbReference type="Pfam" id="PF20450">
    <property type="entry name" value="PPV_E1_DBD"/>
    <property type="match status" value="1"/>
</dbReference>
<dbReference type="Pfam" id="PF00524">
    <property type="entry name" value="PPV_E1_N"/>
    <property type="match status" value="1"/>
</dbReference>
<dbReference type="SUPFAM" id="SSF55464">
    <property type="entry name" value="Origin of replication-binding domain, RBD-like"/>
    <property type="match status" value="1"/>
</dbReference>
<reference key="1">
    <citation type="submission" date="1994-08" db="EMBL/GenBank/DDBJ databases">
        <authorList>
            <person name="Wu X."/>
            <person name="Xiao W."/>
            <person name="Brandsma J."/>
        </authorList>
    </citation>
    <scope>NUCLEOTIDE SEQUENCE [GENOMIC DNA]</scope>
</reference>
<organismHost>
    <name type="scientific">Rodentia</name>
    <dbReference type="NCBI Taxonomy" id="9989"/>
</organismHost>
<proteinExistence type="inferred from homology"/>
<organism>
    <name type="scientific">Cottontail rabbit papillomavirus (strain Washington B)</name>
    <name type="common">CRPV</name>
    <name type="synonym">Papillomavirus sylvilagi</name>
    <dbReference type="NCBI Taxonomy" id="31554"/>
    <lineage>
        <taxon>Viruses</taxon>
        <taxon>Monodnaviria</taxon>
        <taxon>Shotokuvirae</taxon>
        <taxon>Cossaviricota</taxon>
        <taxon>Papovaviricetes</taxon>
        <taxon>Zurhausenvirales</taxon>
        <taxon>Papillomaviridae</taxon>
        <taxon>Firstpapillomavirinae</taxon>
        <taxon>Kappapapillomavirus</taxon>
        <taxon>Kappapapillomavirus 2</taxon>
    </lineage>
</organism>
<evidence type="ECO:0000250" key="1">
    <source>
        <dbReference type="UniProtKB" id="P03116"/>
    </source>
</evidence>
<evidence type="ECO:0000305" key="2"/>
<accession>P51894</accession>
<accession>Q85059</accession>
<protein>
    <recommendedName>
        <fullName>Replication protein E1</fullName>
        <ecNumber evidence="1">5.6.2.4</ecNumber>
    </recommendedName>
    <alternativeName>
        <fullName>ATP-dependent helicase E1</fullName>
    </alternativeName>
    <alternativeName>
        <fullName evidence="2">DNA 3'-5' helicase E1</fullName>
    </alternativeName>
</protein>